<protein>
    <recommendedName>
        <fullName>Zinc finger protein 280B</fullName>
    </recommendedName>
    <alternativeName>
        <fullName>5'OY11.1</fullName>
    </alternativeName>
    <alternativeName>
        <fullName>Suppressor of hairy wing homolog 2</fullName>
    </alternativeName>
    <alternativeName>
        <fullName>Zinc finger protein 279</fullName>
    </alternativeName>
    <alternativeName>
        <fullName>Zinc finger protein 632</fullName>
    </alternativeName>
</protein>
<comment type="function">
    <text>May function as a transcription factor.</text>
</comment>
<comment type="subcellular location">
    <subcellularLocation>
        <location evidence="4">Nucleus</location>
    </subcellularLocation>
</comment>
<comment type="sequence caution" evidence="4">
    <conflict type="erroneous initiation">
        <sequence resource="EMBL-CDS" id="BAA20005"/>
    </conflict>
    <text>Truncated N-terminus.</text>
</comment>
<name>Z280B_HUMAN</name>
<proteinExistence type="evidence at protein level"/>
<keyword id="KW-0007">Acetylation</keyword>
<keyword id="KW-0238">DNA-binding</keyword>
<keyword id="KW-1017">Isopeptide bond</keyword>
<keyword id="KW-0479">Metal-binding</keyword>
<keyword id="KW-0539">Nucleus</keyword>
<keyword id="KW-0597">Phosphoprotein</keyword>
<keyword id="KW-1267">Proteomics identification</keyword>
<keyword id="KW-1185">Reference proteome</keyword>
<keyword id="KW-0677">Repeat</keyword>
<keyword id="KW-0804">Transcription</keyword>
<keyword id="KW-0805">Transcription regulation</keyword>
<keyword id="KW-0832">Ubl conjugation</keyword>
<keyword id="KW-0862">Zinc</keyword>
<keyword id="KW-0863">Zinc-finger</keyword>
<evidence type="ECO:0000255" key="1">
    <source>
        <dbReference type="PROSITE-ProRule" id="PRU00042"/>
    </source>
</evidence>
<evidence type="ECO:0000256" key="2">
    <source>
        <dbReference type="SAM" id="MobiDB-lite"/>
    </source>
</evidence>
<evidence type="ECO:0000269" key="3">
    <source>
    </source>
</evidence>
<evidence type="ECO:0000305" key="4"/>
<evidence type="ECO:0007744" key="5">
    <source>
    </source>
</evidence>
<evidence type="ECO:0007744" key="6">
    <source>
    </source>
</evidence>
<evidence type="ECO:0007744" key="7">
    <source>
    </source>
</evidence>
<accession>Q86YH2</accession>
<sequence>MEQSCEEEKEPEPQKNIQETKQVDDEDAELIFVGVEHVNEDAELIFVGVTSNSKPVVSNILNRVTPGSWSRRKKYDHLRKDTARKLQPKSHETVTSEAVTVLPASQLESRSTDSPIIIEPLSKPDYRNSSPQVVPNNSSELPSPLITFTDSLHHPVSTALSVGGINESPRVSKQLSTFEVNSINPKRAKLRDGIIEGNSSASFPSDTFHTMNTQQSTPSNNVHTSLSHVQNGAPFPAAFPKDNIHFKPINTNLDRANELAKTDILSLTSQNKTFDPKKENPIVLLSDFYYGQHKGEGQPEQKTHTTFKCLSCVKVLKNVKFMNHVKHHLEFEKQRNDSWENHTTCQHCHRQFPTPFQLQCHIENVHTAQEPSTVCKICELSFETDQVLLQHMKDHHKPGEMPYVCQVCHYRSSVFADVETHFRTCHENTKNLLCPFCLKIFKTATPYMCHYRGHWGKSAHQCSKCRLQFLTFKEKMEHKTQCHQMFKKPKQLEGLPPETKVTIQVSLEPLQPGSVDVASITVSTSDSEPSLPRSKSKISKKSH</sequence>
<dbReference type="EMBL" id="D87009">
    <property type="protein sequence ID" value="BAA20005.1"/>
    <property type="status" value="ALT_INIT"/>
    <property type="molecule type" value="Genomic_DNA"/>
</dbReference>
<dbReference type="EMBL" id="CR456614">
    <property type="protein sequence ID" value="CAG30500.1"/>
    <property type="molecule type" value="mRNA"/>
</dbReference>
<dbReference type="EMBL" id="BC040020">
    <property type="protein sequence ID" value="AAH40020.1"/>
    <property type="molecule type" value="mRNA"/>
</dbReference>
<dbReference type="CCDS" id="CCDS13799.1"/>
<dbReference type="RefSeq" id="NP_542942.2">
    <property type="nucleotide sequence ID" value="NM_080764.4"/>
</dbReference>
<dbReference type="RefSeq" id="XP_011528195.1">
    <property type="nucleotide sequence ID" value="XM_011529893.2"/>
</dbReference>
<dbReference type="RefSeq" id="XP_011528197.1">
    <property type="nucleotide sequence ID" value="XM_011529895.2"/>
</dbReference>
<dbReference type="RefSeq" id="XP_011528198.1">
    <property type="nucleotide sequence ID" value="XM_011529896.2"/>
</dbReference>
<dbReference type="RefSeq" id="XP_011528199.1">
    <property type="nucleotide sequence ID" value="XM_011529897.3"/>
</dbReference>
<dbReference type="RefSeq" id="XP_047297099.1">
    <property type="nucleotide sequence ID" value="XM_047441143.1"/>
</dbReference>
<dbReference type="RefSeq" id="XP_047297100.1">
    <property type="nucleotide sequence ID" value="XM_047441144.1"/>
</dbReference>
<dbReference type="RefSeq" id="XP_047297101.1">
    <property type="nucleotide sequence ID" value="XM_047441145.1"/>
</dbReference>
<dbReference type="RefSeq" id="XP_047297102.1">
    <property type="nucleotide sequence ID" value="XM_047441146.1"/>
</dbReference>
<dbReference type="RefSeq" id="XP_054181083.1">
    <property type="nucleotide sequence ID" value="XM_054325108.1"/>
</dbReference>
<dbReference type="RefSeq" id="XP_054181084.1">
    <property type="nucleotide sequence ID" value="XM_054325109.1"/>
</dbReference>
<dbReference type="RefSeq" id="XP_054181085.1">
    <property type="nucleotide sequence ID" value="XM_054325110.1"/>
</dbReference>
<dbReference type="RefSeq" id="XP_054181086.1">
    <property type="nucleotide sequence ID" value="XM_054325111.1"/>
</dbReference>
<dbReference type="RefSeq" id="XP_054185419.1">
    <property type="nucleotide sequence ID" value="XM_054329444.1"/>
</dbReference>
<dbReference type="RefSeq" id="XP_054185420.1">
    <property type="nucleotide sequence ID" value="XM_054329445.1"/>
</dbReference>
<dbReference type="RefSeq" id="XP_054185421.1">
    <property type="nucleotide sequence ID" value="XM_054329446.1"/>
</dbReference>
<dbReference type="RefSeq" id="XP_054185422.1">
    <property type="nucleotide sequence ID" value="XM_054329447.1"/>
</dbReference>
<dbReference type="BioGRID" id="126751">
    <property type="interactions" value="6"/>
</dbReference>
<dbReference type="FunCoup" id="Q86YH2">
    <property type="interactions" value="32"/>
</dbReference>
<dbReference type="IntAct" id="Q86YH2">
    <property type="interactions" value="1"/>
</dbReference>
<dbReference type="STRING" id="9606.ENSP00000485750"/>
<dbReference type="GlyGen" id="Q86YH2">
    <property type="glycosylation" value="2 sites, 1 O-linked glycan (1 site)"/>
</dbReference>
<dbReference type="iPTMnet" id="Q86YH2"/>
<dbReference type="PhosphoSitePlus" id="Q86YH2"/>
<dbReference type="BioMuta" id="ZNF280B"/>
<dbReference type="DMDM" id="313104081"/>
<dbReference type="jPOST" id="Q86YH2"/>
<dbReference type="MassIVE" id="Q86YH2"/>
<dbReference type="PaxDb" id="9606-ENSP00000480958"/>
<dbReference type="PeptideAtlas" id="Q86YH2"/>
<dbReference type="ProteomicsDB" id="70414"/>
<dbReference type="Pumba" id="Q86YH2"/>
<dbReference type="Antibodypedia" id="73538">
    <property type="antibodies" value="103 antibodies from 20 providers"/>
</dbReference>
<dbReference type="DNASU" id="140883"/>
<dbReference type="Ensembl" id="ENST00000613655.1">
    <property type="protein sequence ID" value="ENSP00000481008.1"/>
    <property type="gene ID" value="ENSG00000275004.4"/>
</dbReference>
<dbReference type="Ensembl" id="ENST00000616997.1">
    <property type="protein sequence ID" value="ENSP00000478801.1"/>
    <property type="gene ID" value="ENSG00000277421.3"/>
</dbReference>
<dbReference type="Ensembl" id="ENST00000619852.2">
    <property type="protein sequence ID" value="ENSP00000480958.1"/>
    <property type="gene ID" value="ENSG00000275004.4"/>
</dbReference>
<dbReference type="Ensembl" id="ENST00000626650.3">
    <property type="protein sequence ID" value="ENSP00000485750.1"/>
    <property type="gene ID" value="ENSG00000275004.4"/>
</dbReference>
<dbReference type="Ensembl" id="ENST00000627112.2">
    <property type="protein sequence ID" value="ENSP00000486772.1"/>
    <property type="gene ID" value="ENSG00000277421.3"/>
</dbReference>
<dbReference type="Ensembl" id="ENST00000630760.1">
    <property type="protein sequence ID" value="ENSP00000486860.1"/>
    <property type="gene ID" value="ENSG00000277421.3"/>
</dbReference>
<dbReference type="GeneID" id="140883"/>
<dbReference type="KEGG" id="hsa:140883"/>
<dbReference type="MANE-Select" id="ENST00000626650.3">
    <property type="protein sequence ID" value="ENSP00000485750.1"/>
    <property type="RefSeq nucleotide sequence ID" value="NM_080764.4"/>
    <property type="RefSeq protein sequence ID" value="NP_542942.2"/>
</dbReference>
<dbReference type="UCSC" id="uc032qhv.2">
    <property type="organism name" value="human"/>
</dbReference>
<dbReference type="AGR" id="HGNC:23022"/>
<dbReference type="CTD" id="140883"/>
<dbReference type="DisGeNET" id="140883"/>
<dbReference type="GeneCards" id="ZNF280B"/>
<dbReference type="HGNC" id="HGNC:23022">
    <property type="gene designation" value="ZNF280B"/>
</dbReference>
<dbReference type="HPA" id="ENSG00000275004">
    <property type="expression patterns" value="Tissue enriched (testis)"/>
</dbReference>
<dbReference type="neXtProt" id="NX_Q86YH2"/>
<dbReference type="OpenTargets" id="ENSG00000275004"/>
<dbReference type="PharmGKB" id="PA162409948"/>
<dbReference type="VEuPathDB" id="HostDB:ENSG00000275004"/>
<dbReference type="eggNOG" id="KOG1721">
    <property type="taxonomic scope" value="Eukaryota"/>
</dbReference>
<dbReference type="GeneTree" id="ENSGT00940000161054"/>
<dbReference type="InParanoid" id="Q86YH2"/>
<dbReference type="OMA" id="MEHKTRC"/>
<dbReference type="OrthoDB" id="10032537at2759"/>
<dbReference type="PAN-GO" id="Q86YH2">
    <property type="GO annotations" value="3 GO annotations based on evolutionary models"/>
</dbReference>
<dbReference type="PhylomeDB" id="Q86YH2"/>
<dbReference type="TreeFam" id="TF331707"/>
<dbReference type="PathwayCommons" id="Q86YH2"/>
<dbReference type="SignaLink" id="Q86YH2"/>
<dbReference type="BioGRID-ORCS" id="140883">
    <property type="hits" value="18 hits in 1157 CRISPR screens"/>
</dbReference>
<dbReference type="ChiTaRS" id="ZNF280B">
    <property type="organism name" value="human"/>
</dbReference>
<dbReference type="GenomeRNAi" id="140883"/>
<dbReference type="Pharos" id="Q86YH2">
    <property type="development level" value="Tdark"/>
</dbReference>
<dbReference type="PRO" id="PR:Q86YH2"/>
<dbReference type="Proteomes" id="UP000005640">
    <property type="component" value="Chromosome 22"/>
</dbReference>
<dbReference type="RNAct" id="Q86YH2">
    <property type="molecule type" value="protein"/>
</dbReference>
<dbReference type="Bgee" id="ENSG00000275004">
    <property type="expression patterns" value="Expressed in male germ line stem cell (sensu Vertebrata) in testis and 92 other cell types or tissues"/>
</dbReference>
<dbReference type="ExpressionAtlas" id="Q86YH2">
    <property type="expression patterns" value="baseline and differential"/>
</dbReference>
<dbReference type="GO" id="GO:0005634">
    <property type="term" value="C:nucleus"/>
    <property type="evidence" value="ECO:0007669"/>
    <property type="project" value="UniProtKB-SubCell"/>
</dbReference>
<dbReference type="GO" id="GO:0000981">
    <property type="term" value="F:DNA-binding transcription factor activity, RNA polymerase II-specific"/>
    <property type="evidence" value="ECO:0000318"/>
    <property type="project" value="GO_Central"/>
</dbReference>
<dbReference type="GO" id="GO:0000978">
    <property type="term" value="F:RNA polymerase II cis-regulatory region sequence-specific DNA binding"/>
    <property type="evidence" value="ECO:0000318"/>
    <property type="project" value="GO_Central"/>
</dbReference>
<dbReference type="GO" id="GO:0008270">
    <property type="term" value="F:zinc ion binding"/>
    <property type="evidence" value="ECO:0007669"/>
    <property type="project" value="UniProtKB-KW"/>
</dbReference>
<dbReference type="GO" id="GO:0006355">
    <property type="term" value="P:regulation of DNA-templated transcription"/>
    <property type="evidence" value="ECO:0000318"/>
    <property type="project" value="GO_Central"/>
</dbReference>
<dbReference type="FunFam" id="3.30.160.60:FF:000298">
    <property type="entry name" value="zinc finger protein 280D isoform X1"/>
    <property type="match status" value="1"/>
</dbReference>
<dbReference type="Gene3D" id="3.30.160.60">
    <property type="entry name" value="Classic Zinc Finger"/>
    <property type="match status" value="1"/>
</dbReference>
<dbReference type="InterPro" id="IPR025243">
    <property type="entry name" value="DUF4195"/>
</dbReference>
<dbReference type="InterPro" id="IPR050527">
    <property type="entry name" value="Snail/Krueppel_Znf"/>
</dbReference>
<dbReference type="InterPro" id="IPR036236">
    <property type="entry name" value="Znf_C2H2_sf"/>
</dbReference>
<dbReference type="InterPro" id="IPR013087">
    <property type="entry name" value="Znf_C2H2_type"/>
</dbReference>
<dbReference type="PANTHER" id="PTHR24388">
    <property type="entry name" value="ZINC FINGER PROTEIN"/>
    <property type="match status" value="1"/>
</dbReference>
<dbReference type="PANTHER" id="PTHR24388:SF56">
    <property type="entry name" value="ZINC FINGER PROTEIN 280B"/>
    <property type="match status" value="1"/>
</dbReference>
<dbReference type="Pfam" id="PF13836">
    <property type="entry name" value="DUF4195"/>
    <property type="match status" value="1"/>
</dbReference>
<dbReference type="SMART" id="SM00355">
    <property type="entry name" value="ZnF_C2H2"/>
    <property type="match status" value="6"/>
</dbReference>
<dbReference type="SUPFAM" id="SSF57667">
    <property type="entry name" value="beta-beta-alpha zinc fingers"/>
    <property type="match status" value="2"/>
</dbReference>
<dbReference type="PROSITE" id="PS00028">
    <property type="entry name" value="ZINC_FINGER_C2H2_1"/>
    <property type="match status" value="4"/>
</dbReference>
<dbReference type="PROSITE" id="PS50157">
    <property type="entry name" value="ZINC_FINGER_C2H2_2"/>
    <property type="match status" value="1"/>
</dbReference>
<organism>
    <name type="scientific">Homo sapiens</name>
    <name type="common">Human</name>
    <dbReference type="NCBI Taxonomy" id="9606"/>
    <lineage>
        <taxon>Eukaryota</taxon>
        <taxon>Metazoa</taxon>
        <taxon>Chordata</taxon>
        <taxon>Craniata</taxon>
        <taxon>Vertebrata</taxon>
        <taxon>Euteleostomi</taxon>
        <taxon>Mammalia</taxon>
        <taxon>Eutheria</taxon>
        <taxon>Euarchontoglires</taxon>
        <taxon>Primates</taxon>
        <taxon>Haplorrhini</taxon>
        <taxon>Catarrhini</taxon>
        <taxon>Hominidae</taxon>
        <taxon>Homo</taxon>
    </lineage>
</organism>
<feature type="chain" id="PRO_0000047056" description="Zinc finger protein 280B">
    <location>
        <begin position="1"/>
        <end position="543"/>
    </location>
</feature>
<feature type="zinc finger region" description="C2H2-type 1" evidence="1">
    <location>
        <begin position="343"/>
        <end position="366"/>
    </location>
</feature>
<feature type="zinc finger region" description="C2H2-type 2" evidence="1">
    <location>
        <begin position="373"/>
        <end position="396"/>
    </location>
</feature>
<feature type="zinc finger region" description="C2H2-type 3" evidence="1">
    <location>
        <begin position="432"/>
        <end position="454"/>
    </location>
</feature>
<feature type="zinc finger region" description="C2H2-type 4" evidence="1">
    <location>
        <begin position="460"/>
        <end position="483"/>
    </location>
</feature>
<feature type="region of interest" description="Disordered" evidence="2">
    <location>
        <begin position="1"/>
        <end position="23"/>
    </location>
</feature>
<feature type="region of interest" description="Disordered" evidence="2">
    <location>
        <begin position="105"/>
        <end position="138"/>
    </location>
</feature>
<feature type="region of interest" description="Disordered" evidence="2">
    <location>
        <begin position="518"/>
        <end position="543"/>
    </location>
</feature>
<feature type="compositionally biased region" description="Acidic residues" evidence="2">
    <location>
        <begin position="1"/>
        <end position="10"/>
    </location>
</feature>
<feature type="compositionally biased region" description="Low complexity" evidence="2">
    <location>
        <begin position="128"/>
        <end position="138"/>
    </location>
</feature>
<feature type="compositionally biased region" description="Basic residues" evidence="2">
    <location>
        <begin position="534"/>
        <end position="543"/>
    </location>
</feature>
<feature type="modified residue" description="N-acetylmethionine" evidence="5">
    <location>
        <position position="1"/>
    </location>
</feature>
<feature type="modified residue" description="Phosphoserine" evidence="6">
    <location>
        <position position="68"/>
    </location>
</feature>
<feature type="modified residue" description="Phosphoserine" evidence="6">
    <location>
        <position position="70"/>
    </location>
</feature>
<feature type="cross-link" description="Glycyl lysine isopeptide (Lys-Gly) (interchain with G-Cter in SUMO2)" evidence="7">
    <location>
        <position position="173"/>
    </location>
</feature>
<feature type="cross-link" description="Glycyl lysine isopeptide (Lys-Gly) (interchain with G-Cter in SUMO2)" evidence="7">
    <location>
        <position position="247"/>
    </location>
</feature>
<feature type="cross-link" description="Glycyl lysine isopeptide (Lys-Gly) (interchain with G-Cter in SUMO2)" evidence="7">
    <location>
        <position position="261"/>
    </location>
</feature>
<feature type="sequence variant" id="VAR_028013" description="In dbSNP:rs2236729." evidence="3">
    <original>A</original>
    <variation>E</variation>
    <location>
        <position position="256"/>
    </location>
</feature>
<feature type="sequence variant" id="VAR_028014" description="In dbSNP:rs12484816.">
    <original>V</original>
    <variation>G</variation>
    <location>
        <position position="522"/>
    </location>
</feature>
<gene>
    <name type="primary">ZNF280B</name>
    <name type="synonym">SUHW2</name>
    <name type="synonym">ZNF279</name>
    <name type="synonym">ZNF632</name>
</gene>
<reference key="1">
    <citation type="journal article" date="1997" name="Genome Res.">
        <title>One-megabase sequence analysis of the human immunoglobulin lambda gene locus.</title>
        <authorList>
            <person name="Kawasaki K."/>
            <person name="Minoshima S."/>
            <person name="Nakato E."/>
            <person name="Shibuya K."/>
            <person name="Shintani A."/>
            <person name="Schmeits J.L."/>
            <person name="Wang J."/>
            <person name="Shimizu N."/>
        </authorList>
    </citation>
    <scope>NUCLEOTIDE SEQUENCE [GENOMIC DNA]</scope>
    <scope>VARIANT GLU-256</scope>
</reference>
<reference key="2">
    <citation type="journal article" date="2004" name="Genome Biol.">
        <title>A genome annotation-driven approach to cloning the human ORFeome.</title>
        <authorList>
            <person name="Collins J.E."/>
            <person name="Wright C.L."/>
            <person name="Edwards C.A."/>
            <person name="Davis M.P."/>
            <person name="Grinham J.A."/>
            <person name="Cole C.G."/>
            <person name="Goward M.E."/>
            <person name="Aguado B."/>
            <person name="Mallya M."/>
            <person name="Mokrab Y."/>
            <person name="Huckle E.J."/>
            <person name="Beare D.M."/>
            <person name="Dunham I."/>
        </authorList>
    </citation>
    <scope>NUCLEOTIDE SEQUENCE [LARGE SCALE MRNA]</scope>
</reference>
<reference key="3">
    <citation type="journal article" date="1999" name="Nature">
        <title>The DNA sequence of human chromosome 22.</title>
        <authorList>
            <person name="Dunham I."/>
            <person name="Hunt A.R."/>
            <person name="Collins J.E."/>
            <person name="Bruskiewich R."/>
            <person name="Beare D.M."/>
            <person name="Clamp M."/>
            <person name="Smink L.J."/>
            <person name="Ainscough R."/>
            <person name="Almeida J.P."/>
            <person name="Babbage A.K."/>
            <person name="Bagguley C."/>
            <person name="Bailey J."/>
            <person name="Barlow K.F."/>
            <person name="Bates K.N."/>
            <person name="Beasley O.P."/>
            <person name="Bird C.P."/>
            <person name="Blakey S.E."/>
            <person name="Bridgeman A.M."/>
            <person name="Buck D."/>
            <person name="Burgess J."/>
            <person name="Burrill W.D."/>
            <person name="Burton J."/>
            <person name="Carder C."/>
            <person name="Carter N.P."/>
            <person name="Chen Y."/>
            <person name="Clark G."/>
            <person name="Clegg S.M."/>
            <person name="Cobley V.E."/>
            <person name="Cole C.G."/>
            <person name="Collier R.E."/>
            <person name="Connor R."/>
            <person name="Conroy D."/>
            <person name="Corby N.R."/>
            <person name="Coville G.J."/>
            <person name="Cox A.V."/>
            <person name="Davis J."/>
            <person name="Dawson E."/>
            <person name="Dhami P.D."/>
            <person name="Dockree C."/>
            <person name="Dodsworth S.J."/>
            <person name="Durbin R.M."/>
            <person name="Ellington A.G."/>
            <person name="Evans K.L."/>
            <person name="Fey J.M."/>
            <person name="Fleming K."/>
            <person name="French L."/>
            <person name="Garner A.A."/>
            <person name="Gilbert J.G.R."/>
            <person name="Goward M.E."/>
            <person name="Grafham D.V."/>
            <person name="Griffiths M.N.D."/>
            <person name="Hall C."/>
            <person name="Hall R.E."/>
            <person name="Hall-Tamlyn G."/>
            <person name="Heathcott R.W."/>
            <person name="Ho S."/>
            <person name="Holmes S."/>
            <person name="Hunt S.E."/>
            <person name="Jones M.C."/>
            <person name="Kershaw J."/>
            <person name="Kimberley A.M."/>
            <person name="King A."/>
            <person name="Laird G.K."/>
            <person name="Langford C.F."/>
            <person name="Leversha M.A."/>
            <person name="Lloyd C."/>
            <person name="Lloyd D.M."/>
            <person name="Martyn I.D."/>
            <person name="Mashreghi-Mohammadi M."/>
            <person name="Matthews L.H."/>
            <person name="Mccann O.T."/>
            <person name="Mcclay J."/>
            <person name="Mclaren S."/>
            <person name="McMurray A.A."/>
            <person name="Milne S.A."/>
            <person name="Mortimore B.J."/>
            <person name="Odell C.N."/>
            <person name="Pavitt R."/>
            <person name="Pearce A.V."/>
            <person name="Pearson D."/>
            <person name="Phillimore B.J.C.T."/>
            <person name="Phillips S.H."/>
            <person name="Plumb R.W."/>
            <person name="Ramsay H."/>
            <person name="Ramsey Y."/>
            <person name="Rogers L."/>
            <person name="Ross M.T."/>
            <person name="Scott C.E."/>
            <person name="Sehra H.K."/>
            <person name="Skuce C.D."/>
            <person name="Smalley S."/>
            <person name="Smith M.L."/>
            <person name="Soderlund C."/>
            <person name="Spragon L."/>
            <person name="Steward C.A."/>
            <person name="Sulston J.E."/>
            <person name="Swann R.M."/>
            <person name="Vaudin M."/>
            <person name="Wall M."/>
            <person name="Wallis J.M."/>
            <person name="Whiteley M.N."/>
            <person name="Willey D.L."/>
            <person name="Williams L."/>
            <person name="Williams S.A."/>
            <person name="Williamson H."/>
            <person name="Wilmer T.E."/>
            <person name="Wilming L."/>
            <person name="Wright C.L."/>
            <person name="Hubbard T."/>
            <person name="Bentley D.R."/>
            <person name="Beck S."/>
            <person name="Rogers J."/>
            <person name="Shimizu N."/>
            <person name="Minoshima S."/>
            <person name="Kawasaki K."/>
            <person name="Sasaki T."/>
            <person name="Asakawa S."/>
            <person name="Kudoh J."/>
            <person name="Shintani A."/>
            <person name="Shibuya K."/>
            <person name="Yoshizaki Y."/>
            <person name="Aoki N."/>
            <person name="Mitsuyama S."/>
            <person name="Roe B.A."/>
            <person name="Chen F."/>
            <person name="Chu L."/>
            <person name="Crabtree J."/>
            <person name="Deschamps S."/>
            <person name="Do A."/>
            <person name="Do T."/>
            <person name="Dorman A."/>
            <person name="Fang F."/>
            <person name="Fu Y."/>
            <person name="Hu P."/>
            <person name="Hua A."/>
            <person name="Kenton S."/>
            <person name="Lai H."/>
            <person name="Lao H.I."/>
            <person name="Lewis J."/>
            <person name="Lewis S."/>
            <person name="Lin S.-P."/>
            <person name="Loh P."/>
            <person name="Malaj E."/>
            <person name="Nguyen T."/>
            <person name="Pan H."/>
            <person name="Phan S."/>
            <person name="Qi S."/>
            <person name="Qian Y."/>
            <person name="Ray L."/>
            <person name="Ren Q."/>
            <person name="Shaull S."/>
            <person name="Sloan D."/>
            <person name="Song L."/>
            <person name="Wang Q."/>
            <person name="Wang Y."/>
            <person name="Wang Z."/>
            <person name="White J."/>
            <person name="Willingham D."/>
            <person name="Wu H."/>
            <person name="Yao Z."/>
            <person name="Zhan M."/>
            <person name="Zhang G."/>
            <person name="Chissoe S."/>
            <person name="Murray J."/>
            <person name="Miller N."/>
            <person name="Minx P."/>
            <person name="Fulton R."/>
            <person name="Johnson D."/>
            <person name="Bemis G."/>
            <person name="Bentley D."/>
            <person name="Bradshaw H."/>
            <person name="Bourne S."/>
            <person name="Cordes M."/>
            <person name="Du Z."/>
            <person name="Fulton L."/>
            <person name="Goela D."/>
            <person name="Graves T."/>
            <person name="Hawkins J."/>
            <person name="Hinds K."/>
            <person name="Kemp K."/>
            <person name="Latreille P."/>
            <person name="Layman D."/>
            <person name="Ozersky P."/>
            <person name="Rohlfing T."/>
            <person name="Scheet P."/>
            <person name="Walker C."/>
            <person name="Wamsley A."/>
            <person name="Wohldmann P."/>
            <person name="Pepin K."/>
            <person name="Nelson J."/>
            <person name="Korf I."/>
            <person name="Bedell J.A."/>
            <person name="Hillier L.W."/>
            <person name="Mardis E."/>
            <person name="Waterston R."/>
            <person name="Wilson R."/>
            <person name="Emanuel B.S."/>
            <person name="Shaikh T."/>
            <person name="Kurahashi H."/>
            <person name="Saitta S."/>
            <person name="Budarf M.L."/>
            <person name="McDermid H.E."/>
            <person name="Johnson A."/>
            <person name="Wong A.C.C."/>
            <person name="Morrow B.E."/>
            <person name="Edelmann L."/>
            <person name="Kim U.J."/>
            <person name="Shizuya H."/>
            <person name="Simon M.I."/>
            <person name="Dumanski J.P."/>
            <person name="Peyrard M."/>
            <person name="Kedra D."/>
            <person name="Seroussi E."/>
            <person name="Fransson I."/>
            <person name="Tapia I."/>
            <person name="Bruder C.E."/>
            <person name="O'Brien K.P."/>
            <person name="Wilkinson P."/>
            <person name="Bodenteich A."/>
            <person name="Hartman K."/>
            <person name="Hu X."/>
            <person name="Khan A.S."/>
            <person name="Lane L."/>
            <person name="Tilahun Y."/>
            <person name="Wright H."/>
        </authorList>
    </citation>
    <scope>NUCLEOTIDE SEQUENCE [LARGE SCALE GENOMIC DNA]</scope>
</reference>
<reference key="4">
    <citation type="journal article" date="2004" name="Genome Res.">
        <title>The status, quality, and expansion of the NIH full-length cDNA project: the Mammalian Gene Collection (MGC).</title>
        <authorList>
            <consortium name="The MGC Project Team"/>
        </authorList>
    </citation>
    <scope>NUCLEOTIDE SEQUENCE [LARGE SCALE MRNA]</scope>
    <source>
        <tissue>Uterus</tissue>
    </source>
</reference>
<reference key="5">
    <citation type="journal article" date="2009" name="Anal. Chem.">
        <title>Lys-N and trypsin cover complementary parts of the phosphoproteome in a refined SCX-based approach.</title>
        <authorList>
            <person name="Gauci S."/>
            <person name="Helbig A.O."/>
            <person name="Slijper M."/>
            <person name="Krijgsveld J."/>
            <person name="Heck A.J."/>
            <person name="Mohammed S."/>
        </authorList>
    </citation>
    <scope>ACETYLATION [LARGE SCALE ANALYSIS] AT MET-1</scope>
    <scope>IDENTIFICATION BY MASS SPECTROMETRY [LARGE SCALE ANALYSIS]</scope>
</reference>
<reference key="6">
    <citation type="journal article" date="2013" name="J. Proteome Res.">
        <title>Toward a comprehensive characterization of a human cancer cell phosphoproteome.</title>
        <authorList>
            <person name="Zhou H."/>
            <person name="Di Palma S."/>
            <person name="Preisinger C."/>
            <person name="Peng M."/>
            <person name="Polat A.N."/>
            <person name="Heck A.J."/>
            <person name="Mohammed S."/>
        </authorList>
    </citation>
    <scope>PHOSPHORYLATION [LARGE SCALE ANALYSIS] AT SER-68 AND SER-70</scope>
    <scope>IDENTIFICATION BY MASS SPECTROMETRY [LARGE SCALE ANALYSIS]</scope>
    <source>
        <tissue>Cervix carcinoma</tissue>
        <tissue>Erythroleukemia</tissue>
    </source>
</reference>
<reference key="7">
    <citation type="journal article" date="2017" name="Nat. Struct. Mol. Biol.">
        <title>Site-specific mapping of the human SUMO proteome reveals co-modification with phosphorylation.</title>
        <authorList>
            <person name="Hendriks I.A."/>
            <person name="Lyon D."/>
            <person name="Young C."/>
            <person name="Jensen L.J."/>
            <person name="Vertegaal A.C."/>
            <person name="Nielsen M.L."/>
        </authorList>
    </citation>
    <scope>SUMOYLATION [LARGE SCALE ANALYSIS] AT LYS-173; LYS-247 AND LYS-261</scope>
    <scope>IDENTIFICATION BY MASS SPECTROMETRY [LARGE SCALE ANALYSIS]</scope>
</reference>